<organism>
    <name type="scientific">Chlamydia trachomatis serovar D (strain ATCC VR-885 / DSM 19411 / UW-3/Cx)</name>
    <dbReference type="NCBI Taxonomy" id="272561"/>
    <lineage>
        <taxon>Bacteria</taxon>
        <taxon>Pseudomonadati</taxon>
        <taxon>Chlamydiota</taxon>
        <taxon>Chlamydiia</taxon>
        <taxon>Chlamydiales</taxon>
        <taxon>Chlamydiaceae</taxon>
        <taxon>Chlamydia/Chlamydophila group</taxon>
        <taxon>Chlamydia</taxon>
    </lineage>
</organism>
<keyword id="KW-0067">ATP-binding</keyword>
<keyword id="KW-0963">Cytoplasm</keyword>
<keyword id="KW-0418">Kinase</keyword>
<keyword id="KW-0479">Metal-binding</keyword>
<keyword id="KW-0545">Nucleotide biosynthesis</keyword>
<keyword id="KW-0547">Nucleotide-binding</keyword>
<keyword id="KW-1185">Reference proteome</keyword>
<keyword id="KW-0808">Transferase</keyword>
<keyword id="KW-0862">Zinc</keyword>
<feature type="chain" id="PRO_0000158755" description="Adenylate kinase">
    <location>
        <begin position="1"/>
        <end position="245"/>
    </location>
</feature>
<feature type="region of interest" description="NMP" evidence="1">
    <location>
        <begin position="35"/>
        <end position="64"/>
    </location>
</feature>
<feature type="region of interest" description="LID" evidence="1">
    <location>
        <begin position="143"/>
        <end position="176"/>
    </location>
</feature>
<feature type="binding site" evidence="1">
    <location>
        <begin position="15"/>
        <end position="20"/>
    </location>
    <ligand>
        <name>ATP</name>
        <dbReference type="ChEBI" id="CHEBI:30616"/>
    </ligand>
</feature>
<feature type="binding site" evidence="1">
    <location>
        <position position="36"/>
    </location>
    <ligand>
        <name>AMP</name>
        <dbReference type="ChEBI" id="CHEBI:456215"/>
    </ligand>
</feature>
<feature type="binding site" evidence="1">
    <location>
        <position position="41"/>
    </location>
    <ligand>
        <name>AMP</name>
        <dbReference type="ChEBI" id="CHEBI:456215"/>
    </ligand>
</feature>
<feature type="binding site" evidence="1">
    <location>
        <begin position="62"/>
        <end position="64"/>
    </location>
    <ligand>
        <name>AMP</name>
        <dbReference type="ChEBI" id="CHEBI:456215"/>
    </ligand>
</feature>
<feature type="binding site" evidence="1">
    <location>
        <begin position="103"/>
        <end position="106"/>
    </location>
    <ligand>
        <name>AMP</name>
        <dbReference type="ChEBI" id="CHEBI:456215"/>
    </ligand>
</feature>
<feature type="binding site" evidence="1">
    <location>
        <position position="110"/>
    </location>
    <ligand>
        <name>AMP</name>
        <dbReference type="ChEBI" id="CHEBI:456215"/>
    </ligand>
</feature>
<feature type="binding site" evidence="1">
    <location>
        <position position="144"/>
    </location>
    <ligand>
        <name>ATP</name>
        <dbReference type="ChEBI" id="CHEBI:30616"/>
    </ligand>
</feature>
<feature type="binding site" evidence="1">
    <location>
        <position position="147"/>
    </location>
    <ligand>
        <name>Zn(2+)</name>
        <dbReference type="ChEBI" id="CHEBI:29105"/>
        <note>structural</note>
    </ligand>
</feature>
<feature type="binding site" evidence="1">
    <location>
        <position position="150"/>
    </location>
    <ligand>
        <name>Zn(2+)</name>
        <dbReference type="ChEBI" id="CHEBI:29105"/>
        <note>structural</note>
    </ligand>
</feature>
<feature type="binding site" evidence="1">
    <location>
        <begin position="153"/>
        <end position="154"/>
    </location>
    <ligand>
        <name>ATP</name>
        <dbReference type="ChEBI" id="CHEBI:30616"/>
    </ligand>
</feature>
<feature type="binding site" evidence="1">
    <location>
        <position position="163"/>
    </location>
    <ligand>
        <name>Zn(2+)</name>
        <dbReference type="ChEBI" id="CHEBI:29105"/>
        <note>structural</note>
    </ligand>
</feature>
<feature type="binding site" evidence="1">
    <location>
        <position position="166"/>
    </location>
    <ligand>
        <name>Zn(2+)</name>
        <dbReference type="ChEBI" id="CHEBI:29105"/>
        <note>structural</note>
    </ligand>
</feature>
<feature type="binding site" evidence="1">
    <location>
        <position position="173"/>
    </location>
    <ligand>
        <name>AMP</name>
        <dbReference type="ChEBI" id="CHEBI:456215"/>
    </ligand>
</feature>
<feature type="binding site" evidence="1">
    <location>
        <position position="184"/>
    </location>
    <ligand>
        <name>AMP</name>
        <dbReference type="ChEBI" id="CHEBI:456215"/>
    </ligand>
</feature>
<feature type="binding site" evidence="1">
    <location>
        <position position="212"/>
    </location>
    <ligand>
        <name>ATP</name>
        <dbReference type="ChEBI" id="CHEBI:30616"/>
    </ligand>
</feature>
<dbReference type="EC" id="2.7.4.3" evidence="1"/>
<dbReference type="EMBL" id="AE001273">
    <property type="protein sequence ID" value="AAC67719.1"/>
    <property type="molecule type" value="Genomic_DNA"/>
</dbReference>
<dbReference type="PIR" id="D71554">
    <property type="entry name" value="D71554"/>
</dbReference>
<dbReference type="RefSeq" id="NP_219631.1">
    <property type="nucleotide sequence ID" value="NC_000117.1"/>
</dbReference>
<dbReference type="RefSeq" id="WP_009872398.1">
    <property type="nucleotide sequence ID" value="NC_000117.1"/>
</dbReference>
<dbReference type="SMR" id="O84130"/>
<dbReference type="FunCoup" id="O84130">
    <property type="interactions" value="257"/>
</dbReference>
<dbReference type="STRING" id="272561.CT_128"/>
<dbReference type="EnsemblBacteria" id="AAC67719">
    <property type="protein sequence ID" value="AAC67719"/>
    <property type="gene ID" value="CT_128"/>
</dbReference>
<dbReference type="GeneID" id="884113"/>
<dbReference type="KEGG" id="ctr:CT_128"/>
<dbReference type="PATRIC" id="fig|272561.5.peg.140"/>
<dbReference type="HOGENOM" id="CLU_032354_1_2_0"/>
<dbReference type="InParanoid" id="O84130"/>
<dbReference type="OrthoDB" id="9805030at2"/>
<dbReference type="UniPathway" id="UPA00588">
    <property type="reaction ID" value="UER00649"/>
</dbReference>
<dbReference type="Proteomes" id="UP000000431">
    <property type="component" value="Chromosome"/>
</dbReference>
<dbReference type="GO" id="GO:0005737">
    <property type="term" value="C:cytoplasm"/>
    <property type="evidence" value="ECO:0000318"/>
    <property type="project" value="GO_Central"/>
</dbReference>
<dbReference type="GO" id="GO:0005829">
    <property type="term" value="C:cytosol"/>
    <property type="evidence" value="ECO:0000318"/>
    <property type="project" value="GO_Central"/>
</dbReference>
<dbReference type="GO" id="GO:0004017">
    <property type="term" value="F:adenylate kinase activity"/>
    <property type="evidence" value="ECO:0000318"/>
    <property type="project" value="GO_Central"/>
</dbReference>
<dbReference type="GO" id="GO:0005524">
    <property type="term" value="F:ATP binding"/>
    <property type="evidence" value="ECO:0007669"/>
    <property type="project" value="UniProtKB-UniRule"/>
</dbReference>
<dbReference type="GO" id="GO:0046872">
    <property type="term" value="F:metal ion binding"/>
    <property type="evidence" value="ECO:0007669"/>
    <property type="project" value="UniProtKB-KW"/>
</dbReference>
<dbReference type="GO" id="GO:0004550">
    <property type="term" value="F:nucleoside diphosphate kinase activity"/>
    <property type="evidence" value="ECO:0000318"/>
    <property type="project" value="GO_Central"/>
</dbReference>
<dbReference type="GO" id="GO:0044209">
    <property type="term" value="P:AMP salvage"/>
    <property type="evidence" value="ECO:0007669"/>
    <property type="project" value="UniProtKB-UniRule"/>
</dbReference>
<dbReference type="GO" id="GO:0009132">
    <property type="term" value="P:nucleoside diphosphate metabolic process"/>
    <property type="evidence" value="ECO:0000318"/>
    <property type="project" value="GO_Central"/>
</dbReference>
<dbReference type="GO" id="GO:0009123">
    <property type="term" value="P:nucleoside monophosphate metabolic process"/>
    <property type="evidence" value="ECO:0000318"/>
    <property type="project" value="GO_Central"/>
</dbReference>
<dbReference type="CDD" id="cd01428">
    <property type="entry name" value="ADK"/>
    <property type="match status" value="1"/>
</dbReference>
<dbReference type="Gene3D" id="3.40.50.300">
    <property type="entry name" value="P-loop containing nucleotide triphosphate hydrolases"/>
    <property type="match status" value="1"/>
</dbReference>
<dbReference type="HAMAP" id="MF_00235">
    <property type="entry name" value="Adenylate_kinase_Adk"/>
    <property type="match status" value="1"/>
</dbReference>
<dbReference type="InterPro" id="IPR006259">
    <property type="entry name" value="Adenyl_kin_sub"/>
</dbReference>
<dbReference type="InterPro" id="IPR000850">
    <property type="entry name" value="Adenylat/UMP-CMP_kin"/>
</dbReference>
<dbReference type="InterPro" id="IPR033690">
    <property type="entry name" value="Adenylat_kinase_CS"/>
</dbReference>
<dbReference type="InterPro" id="IPR027417">
    <property type="entry name" value="P-loop_NTPase"/>
</dbReference>
<dbReference type="NCBIfam" id="TIGR01351">
    <property type="entry name" value="adk"/>
    <property type="match status" value="1"/>
</dbReference>
<dbReference type="NCBIfam" id="NF001385">
    <property type="entry name" value="PRK00279.2-3"/>
    <property type="match status" value="1"/>
</dbReference>
<dbReference type="PANTHER" id="PTHR23359">
    <property type="entry name" value="NUCLEOTIDE KINASE"/>
    <property type="match status" value="1"/>
</dbReference>
<dbReference type="Pfam" id="PF00406">
    <property type="entry name" value="ADK"/>
    <property type="match status" value="1"/>
</dbReference>
<dbReference type="PRINTS" id="PR00094">
    <property type="entry name" value="ADENYLTKNASE"/>
</dbReference>
<dbReference type="SUPFAM" id="SSF52540">
    <property type="entry name" value="P-loop containing nucleoside triphosphate hydrolases"/>
    <property type="match status" value="1"/>
</dbReference>
<dbReference type="SUPFAM" id="SSF57802">
    <property type="entry name" value="Rubredoxin-like"/>
    <property type="match status" value="1"/>
</dbReference>
<dbReference type="PROSITE" id="PS00113">
    <property type="entry name" value="ADENYLATE_KINASE"/>
    <property type="match status" value="1"/>
</dbReference>
<sequence length="245" mass="27785">MDRSPLFLIIMGAPGSGKGTQSKLLASQLSLLHISSGDLLRDAVSKDTPLSQEIKSYLDQGKLLPDTLVWKLVHEKLDEFQQDTLLRRLSFLSRSENSAILDGFPRTVTQAKLLHEFLSSYFPNYKVILLDISDEEVLNRLTSRYICPACQGIYNEQQGFSSCPKCSVELIRRSDDTLEVILDRIQTYKQETQPVLDYYTEKQKLITIDANAPTQQVFQSILDSLSASLVYQERDCCNCDCDDED</sequence>
<comment type="function">
    <text evidence="1">Catalyzes the reversible transfer of the terminal phosphate group between ATP and AMP. Plays an important role in cellular energy homeostasis and in adenine nucleotide metabolism.</text>
</comment>
<comment type="catalytic activity">
    <reaction evidence="1">
        <text>AMP + ATP = 2 ADP</text>
        <dbReference type="Rhea" id="RHEA:12973"/>
        <dbReference type="ChEBI" id="CHEBI:30616"/>
        <dbReference type="ChEBI" id="CHEBI:456215"/>
        <dbReference type="ChEBI" id="CHEBI:456216"/>
        <dbReference type="EC" id="2.7.4.3"/>
    </reaction>
</comment>
<comment type="pathway">
    <text evidence="1">Purine metabolism; AMP biosynthesis via salvage pathway; AMP from ADP: step 1/1.</text>
</comment>
<comment type="subunit">
    <text evidence="1">Monomer.</text>
</comment>
<comment type="subcellular location">
    <subcellularLocation>
        <location evidence="1">Cytoplasm</location>
    </subcellularLocation>
</comment>
<comment type="domain">
    <text evidence="1">Consists of three domains, a large central CORE domain and two small peripheral domains, NMPbind and LID, which undergo movements during catalysis. The LID domain closes over the site of phosphoryl transfer upon ATP binding. Assembling and dissambling the active center during each catalytic cycle provides an effective means to prevent ATP hydrolysis. Some bacteria have evolved a zinc-coordinating structure that stabilizes the LID domain.</text>
</comment>
<comment type="similarity">
    <text evidence="1">Belongs to the adenylate kinase family.</text>
</comment>
<protein>
    <recommendedName>
        <fullName evidence="1">Adenylate kinase</fullName>
        <shortName evidence="1">AK</shortName>
        <ecNumber evidence="1">2.7.4.3</ecNumber>
    </recommendedName>
    <alternativeName>
        <fullName evidence="1">ATP-AMP transphosphorylase</fullName>
    </alternativeName>
    <alternativeName>
        <fullName evidence="1">ATP:AMP phosphotransferase</fullName>
    </alternativeName>
    <alternativeName>
        <fullName evidence="1">Adenylate monophosphate kinase</fullName>
    </alternativeName>
</protein>
<proteinExistence type="inferred from homology"/>
<name>KAD_CHLTR</name>
<accession>O84130</accession>
<evidence type="ECO:0000255" key="1">
    <source>
        <dbReference type="HAMAP-Rule" id="MF_00235"/>
    </source>
</evidence>
<gene>
    <name evidence="1" type="primary">adk</name>
    <name type="ordered locus">CT_128</name>
</gene>
<reference key="1">
    <citation type="journal article" date="1998" name="Science">
        <title>Genome sequence of an obligate intracellular pathogen of humans: Chlamydia trachomatis.</title>
        <authorList>
            <person name="Stephens R.S."/>
            <person name="Kalman S."/>
            <person name="Lammel C.J."/>
            <person name="Fan J."/>
            <person name="Marathe R."/>
            <person name="Aravind L."/>
            <person name="Mitchell W.P."/>
            <person name="Olinger L."/>
            <person name="Tatusov R.L."/>
            <person name="Zhao Q."/>
            <person name="Koonin E.V."/>
            <person name="Davis R.W."/>
        </authorList>
    </citation>
    <scope>NUCLEOTIDE SEQUENCE [LARGE SCALE GENOMIC DNA]</scope>
    <source>
        <strain>ATCC VR-885 / DSM 19411 / UW-3/Cx</strain>
    </source>
</reference>